<sequence length="396" mass="42934">MAKGKFERTKPHVNVGTIGHVDHGKTTLTAAITTVLTKKFGGEAKAYDQIDAAPEEKARGITINTAHVEYETANRHYAHVDCPGHADYVKNMITGAAQMDGAILVCSAADGPMPQTREHILLARQVGVPYIIVFLNKCDMVDDAELLELVEMEVRELLSKYDFPGDDTPIVKGSAKLALEGDTGELGEVAIMSLADALDTYIPTPERAVDGAFLMPVEDVFSISGRGTVVTGRVERGIVKVGEEIEIVGIKPTVKTTCTGVEMFRKLLDQGQAGDNVGILLRGTKREDVERGQVLAKPGSITPHTHFTAEVYVLSKDEGGRHTPFFNNYRPQFYFRTTDVTGSIELPKDKEMVMPGDNVSITVKLIAPIAMEEGLRFAIREGGRTVGAGVVAKIIE</sequence>
<protein>
    <recommendedName>
        <fullName evidence="2">Elongation factor Tu</fullName>
        <shortName evidence="2">EF-Tu</shortName>
        <ecNumber evidence="2">3.6.5.3</ecNumber>
    </recommendedName>
</protein>
<feature type="chain" id="PRO_0000337335" description="Elongation factor Tu">
    <location>
        <begin position="1"/>
        <end position="396"/>
    </location>
</feature>
<feature type="domain" description="tr-type G">
    <location>
        <begin position="10"/>
        <end position="206"/>
    </location>
</feature>
<feature type="region of interest" description="G1" evidence="1">
    <location>
        <begin position="19"/>
        <end position="26"/>
    </location>
</feature>
<feature type="region of interest" description="G2" evidence="1">
    <location>
        <begin position="60"/>
        <end position="64"/>
    </location>
</feature>
<feature type="region of interest" description="G3" evidence="1">
    <location>
        <begin position="81"/>
        <end position="84"/>
    </location>
</feature>
<feature type="region of interest" description="G4" evidence="1">
    <location>
        <begin position="136"/>
        <end position="139"/>
    </location>
</feature>
<feature type="region of interest" description="G5" evidence="1">
    <location>
        <begin position="174"/>
        <end position="176"/>
    </location>
</feature>
<feature type="binding site" evidence="2">
    <location>
        <begin position="19"/>
        <end position="26"/>
    </location>
    <ligand>
        <name>GTP</name>
        <dbReference type="ChEBI" id="CHEBI:37565"/>
    </ligand>
</feature>
<feature type="binding site" evidence="2">
    <location>
        <position position="26"/>
    </location>
    <ligand>
        <name>Mg(2+)</name>
        <dbReference type="ChEBI" id="CHEBI:18420"/>
    </ligand>
</feature>
<feature type="binding site" evidence="2">
    <location>
        <begin position="81"/>
        <end position="85"/>
    </location>
    <ligand>
        <name>GTP</name>
        <dbReference type="ChEBI" id="CHEBI:37565"/>
    </ligand>
</feature>
<feature type="binding site" evidence="2">
    <location>
        <begin position="136"/>
        <end position="139"/>
    </location>
    <ligand>
        <name>GTP</name>
        <dbReference type="ChEBI" id="CHEBI:37565"/>
    </ligand>
</feature>
<evidence type="ECO:0000250" key="1"/>
<evidence type="ECO:0000255" key="2">
    <source>
        <dbReference type="HAMAP-Rule" id="MF_00118"/>
    </source>
</evidence>
<accession>Q1BRT3</accession>
<comment type="function">
    <text evidence="2">GTP hydrolase that promotes the GTP-dependent binding of aminoacyl-tRNA to the A-site of ribosomes during protein biosynthesis.</text>
</comment>
<comment type="catalytic activity">
    <reaction evidence="2">
        <text>GTP + H2O = GDP + phosphate + H(+)</text>
        <dbReference type="Rhea" id="RHEA:19669"/>
        <dbReference type="ChEBI" id="CHEBI:15377"/>
        <dbReference type="ChEBI" id="CHEBI:15378"/>
        <dbReference type="ChEBI" id="CHEBI:37565"/>
        <dbReference type="ChEBI" id="CHEBI:43474"/>
        <dbReference type="ChEBI" id="CHEBI:58189"/>
        <dbReference type="EC" id="3.6.5.3"/>
    </reaction>
    <physiologicalReaction direction="left-to-right" evidence="2">
        <dbReference type="Rhea" id="RHEA:19670"/>
    </physiologicalReaction>
</comment>
<comment type="subunit">
    <text evidence="2">Monomer.</text>
</comment>
<comment type="subcellular location">
    <subcellularLocation>
        <location evidence="2">Cytoplasm</location>
    </subcellularLocation>
</comment>
<comment type="similarity">
    <text evidence="2">Belongs to the TRAFAC class translation factor GTPase superfamily. Classic translation factor GTPase family. EF-Tu/EF-1A subfamily.</text>
</comment>
<reference key="1">
    <citation type="submission" date="2006-05" db="EMBL/GenBank/DDBJ databases">
        <title>Complete sequence of chromosome 1 of Burkholderia cenocepacia AU 1054.</title>
        <authorList>
            <consortium name="US DOE Joint Genome Institute"/>
            <person name="Copeland A."/>
            <person name="Lucas S."/>
            <person name="Lapidus A."/>
            <person name="Barry K."/>
            <person name="Detter J.C."/>
            <person name="Glavina del Rio T."/>
            <person name="Hammon N."/>
            <person name="Israni S."/>
            <person name="Dalin E."/>
            <person name="Tice H."/>
            <person name="Pitluck S."/>
            <person name="Chain P."/>
            <person name="Malfatti S."/>
            <person name="Shin M."/>
            <person name="Vergez L."/>
            <person name="Schmutz J."/>
            <person name="Larimer F."/>
            <person name="Land M."/>
            <person name="Hauser L."/>
            <person name="Kyrpides N."/>
            <person name="Lykidis A."/>
            <person name="LiPuma J.J."/>
            <person name="Konstantinidis K."/>
            <person name="Tiedje J.M."/>
            <person name="Richardson P."/>
        </authorList>
    </citation>
    <scope>NUCLEOTIDE SEQUENCE [LARGE SCALE GENOMIC DNA]</scope>
    <source>
        <strain>AU 1054</strain>
    </source>
</reference>
<organism>
    <name type="scientific">Burkholderia orbicola (strain AU 1054)</name>
    <dbReference type="NCBI Taxonomy" id="331271"/>
    <lineage>
        <taxon>Bacteria</taxon>
        <taxon>Pseudomonadati</taxon>
        <taxon>Pseudomonadota</taxon>
        <taxon>Betaproteobacteria</taxon>
        <taxon>Burkholderiales</taxon>
        <taxon>Burkholderiaceae</taxon>
        <taxon>Burkholderia</taxon>
        <taxon>Burkholderia cepacia complex</taxon>
        <taxon>Burkholderia orbicola</taxon>
    </lineage>
</organism>
<name>EFTU_BURO1</name>
<gene>
    <name evidence="2" type="primary">tuf1</name>
    <name type="ordered locus">Bcen_2761</name>
</gene>
<gene>
    <name evidence="2" type="primary">tuf2</name>
    <name type="ordered locus">Bcen_2774</name>
</gene>
<proteinExistence type="inferred from homology"/>
<keyword id="KW-0963">Cytoplasm</keyword>
<keyword id="KW-0251">Elongation factor</keyword>
<keyword id="KW-0342">GTP-binding</keyword>
<keyword id="KW-0378">Hydrolase</keyword>
<keyword id="KW-0460">Magnesium</keyword>
<keyword id="KW-0479">Metal-binding</keyword>
<keyword id="KW-0547">Nucleotide-binding</keyword>
<keyword id="KW-0648">Protein biosynthesis</keyword>
<dbReference type="EC" id="3.6.5.3" evidence="2"/>
<dbReference type="EMBL" id="CP000378">
    <property type="protein sequence ID" value="ABF77659.1"/>
    <property type="molecule type" value="Genomic_DNA"/>
</dbReference>
<dbReference type="EMBL" id="CP000378">
    <property type="protein sequence ID" value="ABF77672.1"/>
    <property type="molecule type" value="Genomic_DNA"/>
</dbReference>
<dbReference type="SMR" id="Q1BRT3"/>
<dbReference type="HOGENOM" id="CLU_007265_0_0_4"/>
<dbReference type="GO" id="GO:0005829">
    <property type="term" value="C:cytosol"/>
    <property type="evidence" value="ECO:0007669"/>
    <property type="project" value="TreeGrafter"/>
</dbReference>
<dbReference type="GO" id="GO:0005525">
    <property type="term" value="F:GTP binding"/>
    <property type="evidence" value="ECO:0007669"/>
    <property type="project" value="UniProtKB-UniRule"/>
</dbReference>
<dbReference type="GO" id="GO:0003924">
    <property type="term" value="F:GTPase activity"/>
    <property type="evidence" value="ECO:0007669"/>
    <property type="project" value="InterPro"/>
</dbReference>
<dbReference type="GO" id="GO:0097216">
    <property type="term" value="F:guanosine tetraphosphate binding"/>
    <property type="evidence" value="ECO:0007669"/>
    <property type="project" value="UniProtKB-ARBA"/>
</dbReference>
<dbReference type="GO" id="GO:0003746">
    <property type="term" value="F:translation elongation factor activity"/>
    <property type="evidence" value="ECO:0007669"/>
    <property type="project" value="UniProtKB-UniRule"/>
</dbReference>
<dbReference type="CDD" id="cd01884">
    <property type="entry name" value="EF_Tu"/>
    <property type="match status" value="1"/>
</dbReference>
<dbReference type="CDD" id="cd03697">
    <property type="entry name" value="EFTU_II"/>
    <property type="match status" value="1"/>
</dbReference>
<dbReference type="CDD" id="cd03707">
    <property type="entry name" value="EFTU_III"/>
    <property type="match status" value="1"/>
</dbReference>
<dbReference type="FunFam" id="2.40.30.10:FF:000001">
    <property type="entry name" value="Elongation factor Tu"/>
    <property type="match status" value="1"/>
</dbReference>
<dbReference type="FunFam" id="3.40.50.300:FF:000003">
    <property type="entry name" value="Elongation factor Tu"/>
    <property type="match status" value="1"/>
</dbReference>
<dbReference type="Gene3D" id="3.40.50.300">
    <property type="entry name" value="P-loop containing nucleotide triphosphate hydrolases"/>
    <property type="match status" value="1"/>
</dbReference>
<dbReference type="Gene3D" id="2.40.30.10">
    <property type="entry name" value="Translation factors"/>
    <property type="match status" value="2"/>
</dbReference>
<dbReference type="HAMAP" id="MF_00118_B">
    <property type="entry name" value="EF_Tu_B"/>
    <property type="match status" value="1"/>
</dbReference>
<dbReference type="InterPro" id="IPR041709">
    <property type="entry name" value="EF-Tu_GTP-bd"/>
</dbReference>
<dbReference type="InterPro" id="IPR050055">
    <property type="entry name" value="EF-Tu_GTPase"/>
</dbReference>
<dbReference type="InterPro" id="IPR004161">
    <property type="entry name" value="EFTu-like_2"/>
</dbReference>
<dbReference type="InterPro" id="IPR033720">
    <property type="entry name" value="EFTU_2"/>
</dbReference>
<dbReference type="InterPro" id="IPR031157">
    <property type="entry name" value="G_TR_CS"/>
</dbReference>
<dbReference type="InterPro" id="IPR027417">
    <property type="entry name" value="P-loop_NTPase"/>
</dbReference>
<dbReference type="InterPro" id="IPR005225">
    <property type="entry name" value="Small_GTP-bd"/>
</dbReference>
<dbReference type="InterPro" id="IPR000795">
    <property type="entry name" value="T_Tr_GTP-bd_dom"/>
</dbReference>
<dbReference type="InterPro" id="IPR009000">
    <property type="entry name" value="Transl_B-barrel_sf"/>
</dbReference>
<dbReference type="InterPro" id="IPR009001">
    <property type="entry name" value="Transl_elong_EF1A/Init_IF2_C"/>
</dbReference>
<dbReference type="InterPro" id="IPR004541">
    <property type="entry name" value="Transl_elong_EFTu/EF1A_bac/org"/>
</dbReference>
<dbReference type="InterPro" id="IPR004160">
    <property type="entry name" value="Transl_elong_EFTu/EF1A_C"/>
</dbReference>
<dbReference type="NCBIfam" id="TIGR00485">
    <property type="entry name" value="EF-Tu"/>
    <property type="match status" value="1"/>
</dbReference>
<dbReference type="NCBIfam" id="NF000766">
    <property type="entry name" value="PRK00049.1"/>
    <property type="match status" value="1"/>
</dbReference>
<dbReference type="NCBIfam" id="NF009372">
    <property type="entry name" value="PRK12735.1"/>
    <property type="match status" value="1"/>
</dbReference>
<dbReference type="NCBIfam" id="NF009373">
    <property type="entry name" value="PRK12736.1"/>
    <property type="match status" value="1"/>
</dbReference>
<dbReference type="NCBIfam" id="TIGR00231">
    <property type="entry name" value="small_GTP"/>
    <property type="match status" value="1"/>
</dbReference>
<dbReference type="PANTHER" id="PTHR43721:SF22">
    <property type="entry name" value="ELONGATION FACTOR TU, MITOCHONDRIAL"/>
    <property type="match status" value="1"/>
</dbReference>
<dbReference type="PANTHER" id="PTHR43721">
    <property type="entry name" value="ELONGATION FACTOR TU-RELATED"/>
    <property type="match status" value="1"/>
</dbReference>
<dbReference type="Pfam" id="PF00009">
    <property type="entry name" value="GTP_EFTU"/>
    <property type="match status" value="1"/>
</dbReference>
<dbReference type="Pfam" id="PF03144">
    <property type="entry name" value="GTP_EFTU_D2"/>
    <property type="match status" value="1"/>
</dbReference>
<dbReference type="Pfam" id="PF03143">
    <property type="entry name" value="GTP_EFTU_D3"/>
    <property type="match status" value="1"/>
</dbReference>
<dbReference type="PRINTS" id="PR00315">
    <property type="entry name" value="ELONGATNFCT"/>
</dbReference>
<dbReference type="SUPFAM" id="SSF50465">
    <property type="entry name" value="EF-Tu/eEF-1alpha/eIF2-gamma C-terminal domain"/>
    <property type="match status" value="1"/>
</dbReference>
<dbReference type="SUPFAM" id="SSF52540">
    <property type="entry name" value="P-loop containing nucleoside triphosphate hydrolases"/>
    <property type="match status" value="1"/>
</dbReference>
<dbReference type="SUPFAM" id="SSF50447">
    <property type="entry name" value="Translation proteins"/>
    <property type="match status" value="1"/>
</dbReference>
<dbReference type="PROSITE" id="PS00301">
    <property type="entry name" value="G_TR_1"/>
    <property type="match status" value="1"/>
</dbReference>
<dbReference type="PROSITE" id="PS51722">
    <property type="entry name" value="G_TR_2"/>
    <property type="match status" value="1"/>
</dbReference>